<reference evidence="4" key="1">
    <citation type="submission" date="2003-11" db="UniProtKB">
        <authorList>
            <person name="Uma Maheshwari R."/>
            <person name="Siddharthan S."/>
            <person name="Elango K."/>
            <person name="Anand N."/>
        </authorList>
    </citation>
    <scope>PROTEIN SEQUENCE</scope>
    <source>
        <strain>UU512173</strain>
    </source>
</reference>
<evidence type="ECO:0000250" key="1"/>
<evidence type="ECO:0000250" key="2">
    <source>
        <dbReference type="UniProtKB" id="P13530"/>
    </source>
</evidence>
<evidence type="ECO:0000255" key="3"/>
<evidence type="ECO:0000305" key="4"/>
<gene>
    <name type="primary">cpcA</name>
</gene>
<proteinExistence type="evidence at protein level"/>
<organism>
    <name type="scientific">Tolypothrix scytonemoides</name>
    <dbReference type="NCBI Taxonomy" id="256428"/>
    <lineage>
        <taxon>Bacteria</taxon>
        <taxon>Bacillati</taxon>
        <taxon>Cyanobacteriota</taxon>
        <taxon>Cyanophyceae</taxon>
        <taxon>Nostocales</taxon>
        <taxon>Tolypothrichaceae</taxon>
        <taxon>Tolypothrix</taxon>
    </lineage>
</organism>
<protein>
    <recommendedName>
        <fullName>C-phycocyanin alpha subunit</fullName>
    </recommendedName>
</protein>
<name>PHCA_TOLSC</name>
<accession>P83720</accession>
<dbReference type="GO" id="GO:0030089">
    <property type="term" value="C:phycobilisome"/>
    <property type="evidence" value="ECO:0007669"/>
    <property type="project" value="UniProtKB-KW"/>
</dbReference>
<dbReference type="GO" id="GO:0031676">
    <property type="term" value="C:plasma membrane-derived thylakoid membrane"/>
    <property type="evidence" value="ECO:0007669"/>
    <property type="project" value="UniProtKB-SubCell"/>
</dbReference>
<dbReference type="GO" id="GO:0015979">
    <property type="term" value="P:photosynthesis"/>
    <property type="evidence" value="ECO:0007669"/>
    <property type="project" value="UniProtKB-KW"/>
</dbReference>
<feature type="chain" id="PRO_0000199134" description="C-phycocyanin alpha subunit">
    <location>
        <begin position="1"/>
        <end position="16" status="greater than"/>
    </location>
</feature>
<feature type="non-terminal residue">
    <location>
        <position position="16"/>
    </location>
</feature>
<keyword id="KW-0042">Antenna complex</keyword>
<keyword id="KW-0089">Bile pigment</keyword>
<keyword id="KW-0157">Chromophore</keyword>
<keyword id="KW-0903">Direct protein sequencing</keyword>
<keyword id="KW-0249">Electron transport</keyword>
<keyword id="KW-0472">Membrane</keyword>
<keyword id="KW-0602">Photosynthesis</keyword>
<keyword id="KW-0605">Phycobilisome</keyword>
<keyword id="KW-0793">Thylakoid</keyword>
<keyword id="KW-0813">Transport</keyword>
<comment type="function">
    <text>Light-harvesting photosynthetic bile pigment-protein from the phycobiliprotein complex (phycobilisome, PBS). Phycocyanin is the major phycobiliprotein in the PBS rod.</text>
</comment>
<comment type="subunit">
    <text evidence="2">Heterodimer of an alpha and a beta subunit, which further assembles into trimers and the trimers into hexamers.</text>
</comment>
<comment type="subcellular location">
    <subcellularLocation>
        <location evidence="1">Cellular thylakoid membrane</location>
        <topology evidence="1">Peripheral membrane protein</topology>
        <orientation evidence="1">Cytoplasmic side</orientation>
    </subcellularLocation>
    <text evidence="1">Part of the phycobilisome rod.</text>
</comment>
<comment type="PTM">
    <text evidence="2">Contains one covalently linked bilin chromophore.</text>
</comment>
<comment type="similarity">
    <text evidence="3">Belongs to the phycobiliprotein family.</text>
</comment>
<sequence>VKTPITEAIAAADTQG</sequence>